<protein>
    <recommendedName>
        <fullName>HssA/B-like protein 31</fullName>
    </recommendedName>
</protein>
<evidence type="ECO:0000305" key="1"/>
<reference key="1">
    <citation type="journal article" date="2005" name="Nature">
        <title>The genome of the social amoeba Dictyostelium discoideum.</title>
        <authorList>
            <person name="Eichinger L."/>
            <person name="Pachebat J.A."/>
            <person name="Gloeckner G."/>
            <person name="Rajandream M.A."/>
            <person name="Sucgang R."/>
            <person name="Berriman M."/>
            <person name="Song J."/>
            <person name="Olsen R."/>
            <person name="Szafranski K."/>
            <person name="Xu Q."/>
            <person name="Tunggal B."/>
            <person name="Kummerfeld S."/>
            <person name="Madera M."/>
            <person name="Konfortov B.A."/>
            <person name="Rivero F."/>
            <person name="Bankier A.T."/>
            <person name="Lehmann R."/>
            <person name="Hamlin N."/>
            <person name="Davies R."/>
            <person name="Gaudet P."/>
            <person name="Fey P."/>
            <person name="Pilcher K."/>
            <person name="Chen G."/>
            <person name="Saunders D."/>
            <person name="Sodergren E.J."/>
            <person name="Davis P."/>
            <person name="Kerhornou A."/>
            <person name="Nie X."/>
            <person name="Hall N."/>
            <person name="Anjard C."/>
            <person name="Hemphill L."/>
            <person name="Bason N."/>
            <person name="Farbrother P."/>
            <person name="Desany B."/>
            <person name="Just E."/>
            <person name="Morio T."/>
            <person name="Rost R."/>
            <person name="Churcher C.M."/>
            <person name="Cooper J."/>
            <person name="Haydock S."/>
            <person name="van Driessche N."/>
            <person name="Cronin A."/>
            <person name="Goodhead I."/>
            <person name="Muzny D.M."/>
            <person name="Mourier T."/>
            <person name="Pain A."/>
            <person name="Lu M."/>
            <person name="Harper D."/>
            <person name="Lindsay R."/>
            <person name="Hauser H."/>
            <person name="James K.D."/>
            <person name="Quiles M."/>
            <person name="Madan Babu M."/>
            <person name="Saito T."/>
            <person name="Buchrieser C."/>
            <person name="Wardroper A."/>
            <person name="Felder M."/>
            <person name="Thangavelu M."/>
            <person name="Johnson D."/>
            <person name="Knights A."/>
            <person name="Loulseged H."/>
            <person name="Mungall K.L."/>
            <person name="Oliver K."/>
            <person name="Price C."/>
            <person name="Quail M.A."/>
            <person name="Urushihara H."/>
            <person name="Hernandez J."/>
            <person name="Rabbinowitsch E."/>
            <person name="Steffen D."/>
            <person name="Sanders M."/>
            <person name="Ma J."/>
            <person name="Kohara Y."/>
            <person name="Sharp S."/>
            <person name="Simmonds M.N."/>
            <person name="Spiegler S."/>
            <person name="Tivey A."/>
            <person name="Sugano S."/>
            <person name="White B."/>
            <person name="Walker D."/>
            <person name="Woodward J.R."/>
            <person name="Winckler T."/>
            <person name="Tanaka Y."/>
            <person name="Shaulsky G."/>
            <person name="Schleicher M."/>
            <person name="Weinstock G.M."/>
            <person name="Rosenthal A."/>
            <person name="Cox E.C."/>
            <person name="Chisholm R.L."/>
            <person name="Gibbs R.A."/>
            <person name="Loomis W.F."/>
            <person name="Platzer M."/>
            <person name="Kay R.R."/>
            <person name="Williams J.G."/>
            <person name="Dear P.H."/>
            <person name="Noegel A.A."/>
            <person name="Barrell B.G."/>
            <person name="Kuspa A."/>
        </authorList>
    </citation>
    <scope>NUCLEOTIDE SEQUENCE [LARGE SCALE GENOMIC DNA]</scope>
    <source>
        <strain>AX4</strain>
    </source>
</reference>
<sequence length="87" mass="8520">MTIFSTISSMSNVSSSSKSKISLMANSNGGQSLNNISCGGCGGSSSGGIVYTGPSGRSYTLPELIAVGVAHTKAFLMGASGSGNCSC</sequence>
<dbReference type="EMBL" id="AAFI02000024">
    <property type="protein sequence ID" value="EAL68077.2"/>
    <property type="molecule type" value="Genomic_DNA"/>
</dbReference>
<dbReference type="RefSeq" id="XP_647792.2">
    <property type="nucleotide sequence ID" value="XM_642700.2"/>
</dbReference>
<dbReference type="FunCoup" id="Q54XL1">
    <property type="interactions" value="363"/>
</dbReference>
<dbReference type="PaxDb" id="44689-DDB0252560"/>
<dbReference type="EnsemblProtists" id="EAL68077">
    <property type="protein sequence ID" value="EAL68077"/>
    <property type="gene ID" value="DDB_G0278951"/>
</dbReference>
<dbReference type="GeneID" id="8621751"/>
<dbReference type="KEGG" id="ddi:DDB_G0278951"/>
<dbReference type="dictyBase" id="DDB_G0278951"/>
<dbReference type="VEuPathDB" id="AmoebaDB:DDB_G0278951"/>
<dbReference type="eggNOG" id="ENOG502RINR">
    <property type="taxonomic scope" value="Eukaryota"/>
</dbReference>
<dbReference type="HOGENOM" id="CLU_2488098_0_0_1"/>
<dbReference type="InParanoid" id="Q54XL1"/>
<dbReference type="PRO" id="PR:Q54XL1"/>
<dbReference type="Proteomes" id="UP000002195">
    <property type="component" value="Chromosome 3"/>
</dbReference>
<dbReference type="GO" id="GO:0030587">
    <property type="term" value="P:sorocarp development"/>
    <property type="evidence" value="ECO:0000318"/>
    <property type="project" value="GO_Central"/>
</dbReference>
<dbReference type="InterPro" id="IPR050533">
    <property type="entry name" value="HssA/B-like_chaperone"/>
</dbReference>
<dbReference type="InterPro" id="IPR008455">
    <property type="entry name" value="HssA/B-related"/>
</dbReference>
<dbReference type="PANTHER" id="PTHR31059">
    <property type="entry name" value="HSSA/B-LIKE PROTEIN 1-RELATED-RELATED"/>
    <property type="match status" value="1"/>
</dbReference>
<dbReference type="PANTHER" id="PTHR31059:SF5">
    <property type="entry name" value="HSSA_B-LIKE PROTEIN 1-RELATED"/>
    <property type="match status" value="1"/>
</dbReference>
<dbReference type="Pfam" id="PF05710">
    <property type="entry name" value="Coiled"/>
    <property type="match status" value="1"/>
</dbReference>
<name>HSL31_DICDI</name>
<comment type="similarity">
    <text evidence="1">Belongs to the hssA/B family.</text>
</comment>
<feature type="chain" id="PRO_0000330400" description="HssA/B-like protein 31">
    <location>
        <begin position="1"/>
        <end position="87"/>
    </location>
</feature>
<proteinExistence type="inferred from homology"/>
<keyword id="KW-1185">Reference proteome</keyword>
<gene>
    <name type="primary">hssl31</name>
    <name type="ORF">DDB_G0278951</name>
</gene>
<accession>Q54XL1</accession>
<organism>
    <name type="scientific">Dictyostelium discoideum</name>
    <name type="common">Social amoeba</name>
    <dbReference type="NCBI Taxonomy" id="44689"/>
    <lineage>
        <taxon>Eukaryota</taxon>
        <taxon>Amoebozoa</taxon>
        <taxon>Evosea</taxon>
        <taxon>Eumycetozoa</taxon>
        <taxon>Dictyostelia</taxon>
        <taxon>Dictyosteliales</taxon>
        <taxon>Dictyosteliaceae</taxon>
        <taxon>Dictyostelium</taxon>
    </lineage>
</organism>